<gene>
    <name evidence="1" type="primary">guaAB</name>
    <name type="ordered locus">OE_3571R</name>
</gene>
<feature type="chain" id="PRO_1000120464" description="GMP synthase [glutamine-hydrolyzing] subunit B">
    <location>
        <begin position="1"/>
        <end position="305"/>
    </location>
</feature>
<feature type="domain" description="GMPS ATP-PPase" evidence="1">
    <location>
        <begin position="2"/>
        <end position="185"/>
    </location>
</feature>
<feature type="binding site" evidence="1">
    <location>
        <begin position="29"/>
        <end position="35"/>
    </location>
    <ligand>
        <name>ATP</name>
        <dbReference type="ChEBI" id="CHEBI:30616"/>
    </ligand>
</feature>
<evidence type="ECO:0000255" key="1">
    <source>
        <dbReference type="HAMAP-Rule" id="MF_00345"/>
    </source>
</evidence>
<dbReference type="EC" id="6.3.5.2" evidence="1"/>
<dbReference type="EMBL" id="AM774415">
    <property type="protein sequence ID" value="CAP14330.1"/>
    <property type="molecule type" value="Genomic_DNA"/>
</dbReference>
<dbReference type="SMR" id="B0R6G1"/>
<dbReference type="EnsemblBacteria" id="CAP14330">
    <property type="protein sequence ID" value="CAP14330"/>
    <property type="gene ID" value="OE_3571R"/>
</dbReference>
<dbReference type="KEGG" id="hsl:OE_3571R"/>
<dbReference type="HOGENOM" id="CLU_014340_0_0_2"/>
<dbReference type="PhylomeDB" id="B0R6G1"/>
<dbReference type="UniPathway" id="UPA00189">
    <property type="reaction ID" value="UER00296"/>
</dbReference>
<dbReference type="Proteomes" id="UP000001321">
    <property type="component" value="Chromosome"/>
</dbReference>
<dbReference type="GO" id="GO:0005829">
    <property type="term" value="C:cytosol"/>
    <property type="evidence" value="ECO:0007669"/>
    <property type="project" value="TreeGrafter"/>
</dbReference>
<dbReference type="GO" id="GO:0005524">
    <property type="term" value="F:ATP binding"/>
    <property type="evidence" value="ECO:0007669"/>
    <property type="project" value="UniProtKB-UniRule"/>
</dbReference>
<dbReference type="GO" id="GO:0003921">
    <property type="term" value="F:GMP synthase activity"/>
    <property type="evidence" value="ECO:0007669"/>
    <property type="project" value="InterPro"/>
</dbReference>
<dbReference type="CDD" id="cd01997">
    <property type="entry name" value="GMP_synthase_C"/>
    <property type="match status" value="1"/>
</dbReference>
<dbReference type="FunFam" id="3.40.50.620:FF:000208">
    <property type="entry name" value="GMP synthase [glutamine-hydrolyzing] subunit B"/>
    <property type="match status" value="1"/>
</dbReference>
<dbReference type="Gene3D" id="3.30.300.10">
    <property type="match status" value="1"/>
</dbReference>
<dbReference type="Gene3D" id="3.40.50.620">
    <property type="entry name" value="HUPs"/>
    <property type="match status" value="1"/>
</dbReference>
<dbReference type="HAMAP" id="MF_00345">
    <property type="entry name" value="GMP_synthase_B"/>
    <property type="match status" value="1"/>
</dbReference>
<dbReference type="InterPro" id="IPR001674">
    <property type="entry name" value="GMP_synth_C"/>
</dbReference>
<dbReference type="InterPro" id="IPR026598">
    <property type="entry name" value="GMP_synthase_B"/>
</dbReference>
<dbReference type="InterPro" id="IPR025777">
    <property type="entry name" value="GMPS_ATP_PPase_dom"/>
</dbReference>
<dbReference type="InterPro" id="IPR014729">
    <property type="entry name" value="Rossmann-like_a/b/a_fold"/>
</dbReference>
<dbReference type="NCBIfam" id="TIGR00884">
    <property type="entry name" value="guaA_Cterm"/>
    <property type="match status" value="1"/>
</dbReference>
<dbReference type="PANTHER" id="PTHR11922:SF2">
    <property type="entry name" value="GMP SYNTHASE [GLUTAMINE-HYDROLYZING]"/>
    <property type="match status" value="1"/>
</dbReference>
<dbReference type="PANTHER" id="PTHR11922">
    <property type="entry name" value="GMP SYNTHASE-RELATED"/>
    <property type="match status" value="1"/>
</dbReference>
<dbReference type="Pfam" id="PF00958">
    <property type="entry name" value="GMP_synt_C"/>
    <property type="match status" value="1"/>
</dbReference>
<dbReference type="SUPFAM" id="SSF52402">
    <property type="entry name" value="Adenine nucleotide alpha hydrolases-like"/>
    <property type="match status" value="1"/>
</dbReference>
<dbReference type="SUPFAM" id="SSF54810">
    <property type="entry name" value="GMP synthetase C-terminal dimerisation domain"/>
    <property type="match status" value="1"/>
</dbReference>
<dbReference type="PROSITE" id="PS51553">
    <property type="entry name" value="GMPS_ATP_PPASE"/>
    <property type="match status" value="1"/>
</dbReference>
<proteinExistence type="inferred from homology"/>
<name>GUAAB_HALS3</name>
<reference key="1">
    <citation type="journal article" date="2008" name="Genomics">
        <title>Evolution in the laboratory: the genome of Halobacterium salinarum strain R1 compared to that of strain NRC-1.</title>
        <authorList>
            <person name="Pfeiffer F."/>
            <person name="Schuster S.C."/>
            <person name="Broicher A."/>
            <person name="Falb M."/>
            <person name="Palm P."/>
            <person name="Rodewald K."/>
            <person name="Ruepp A."/>
            <person name="Soppa J."/>
            <person name="Tittor J."/>
            <person name="Oesterhelt D."/>
        </authorList>
    </citation>
    <scope>NUCLEOTIDE SEQUENCE [LARGE SCALE GENOMIC DNA]</scope>
    <source>
        <strain>ATCC 29341 / DSM 671 / R1</strain>
    </source>
</reference>
<comment type="function">
    <text evidence="1">Catalyzes the synthesis of GMP from XMP.</text>
</comment>
<comment type="catalytic activity">
    <reaction evidence="1">
        <text>XMP + L-glutamine + ATP + H2O = GMP + L-glutamate + AMP + diphosphate + 2 H(+)</text>
        <dbReference type="Rhea" id="RHEA:11680"/>
        <dbReference type="ChEBI" id="CHEBI:15377"/>
        <dbReference type="ChEBI" id="CHEBI:15378"/>
        <dbReference type="ChEBI" id="CHEBI:29985"/>
        <dbReference type="ChEBI" id="CHEBI:30616"/>
        <dbReference type="ChEBI" id="CHEBI:33019"/>
        <dbReference type="ChEBI" id="CHEBI:57464"/>
        <dbReference type="ChEBI" id="CHEBI:58115"/>
        <dbReference type="ChEBI" id="CHEBI:58359"/>
        <dbReference type="ChEBI" id="CHEBI:456215"/>
        <dbReference type="EC" id="6.3.5.2"/>
    </reaction>
</comment>
<comment type="pathway">
    <text evidence="1">Purine metabolism; GMP biosynthesis; GMP from XMP (L-Gln route): step 1/1.</text>
</comment>
<comment type="subunit">
    <text evidence="1">Heterodimer composed of a glutamine amidotransferase subunit (A) and a GMP-binding subunit (B).</text>
</comment>
<keyword id="KW-0067">ATP-binding</keyword>
<keyword id="KW-0332">GMP biosynthesis</keyword>
<keyword id="KW-0436">Ligase</keyword>
<keyword id="KW-0547">Nucleotide-binding</keyword>
<keyword id="KW-0658">Purine biosynthesis</keyword>
<sequence length="305" mass="33725">MVDVDSFVEDARAEISEALGDETAIIALSGGVDSSTAAALAYEAVGDQLVPVYVDTGLMRKGETDEIREVFDYMDSLRVVDASDRFFDELAGVTDPEEKRHAIGEQFIREFETVAEEVDATQLVQGTIYPDRIESEGTIKSHHNVGGLPERVGFEGIVEPMRDLYKDEVREVARHLGLEEIISERMPFPGPGLAVRVIGEVTPEKVAVCREATHIVEDELEAYEPWQAFAAVLGRATGVKGDNRVHGHVVAVRSVESRDGMTARAQELEWETLQRLQSRIAGTIDEVSRVVYDVTHKPPATIEYE</sequence>
<organism>
    <name type="scientific">Halobacterium salinarum (strain ATCC 29341 / DSM 671 / R1)</name>
    <dbReference type="NCBI Taxonomy" id="478009"/>
    <lineage>
        <taxon>Archaea</taxon>
        <taxon>Methanobacteriati</taxon>
        <taxon>Methanobacteriota</taxon>
        <taxon>Stenosarchaea group</taxon>
        <taxon>Halobacteria</taxon>
        <taxon>Halobacteriales</taxon>
        <taxon>Halobacteriaceae</taxon>
        <taxon>Halobacterium</taxon>
        <taxon>Halobacterium salinarum NRC-34001</taxon>
    </lineage>
</organism>
<protein>
    <recommendedName>
        <fullName evidence="1">GMP synthase [glutamine-hydrolyzing] subunit B</fullName>
        <ecNumber evidence="1">6.3.5.2</ecNumber>
    </recommendedName>
    <alternativeName>
        <fullName evidence="1">GMP synthetase</fullName>
    </alternativeName>
</protein>
<accession>B0R6G1</accession>